<reference key="1">
    <citation type="submission" date="2007-02" db="EMBL/GenBank/DDBJ databases">
        <title>Complete sequence of chromosome of Yersinia pestis Pestoides F.</title>
        <authorList>
            <consortium name="US DOE Joint Genome Institute"/>
            <person name="Copeland A."/>
            <person name="Lucas S."/>
            <person name="Lapidus A."/>
            <person name="Barry K."/>
            <person name="Detter J.C."/>
            <person name="Glavina del Rio T."/>
            <person name="Hammon N."/>
            <person name="Israni S."/>
            <person name="Dalin E."/>
            <person name="Tice H."/>
            <person name="Pitluck S."/>
            <person name="Di Bartolo G."/>
            <person name="Chain P."/>
            <person name="Malfatti S."/>
            <person name="Shin M."/>
            <person name="Vergez L."/>
            <person name="Schmutz J."/>
            <person name="Larimer F."/>
            <person name="Land M."/>
            <person name="Hauser L."/>
            <person name="Worsham P."/>
            <person name="Chu M."/>
            <person name="Bearden S."/>
            <person name="Garcia E."/>
            <person name="Richardson P."/>
        </authorList>
    </citation>
    <scope>NUCLEOTIDE SEQUENCE [LARGE SCALE GENOMIC DNA]</scope>
    <source>
        <strain>Pestoides F</strain>
    </source>
</reference>
<comment type="function">
    <text evidence="1">Binds directly to 16S ribosomal RNA.</text>
</comment>
<comment type="similarity">
    <text evidence="1">Belongs to the bacterial ribosomal protein bS20 family.</text>
</comment>
<protein>
    <recommendedName>
        <fullName evidence="1">Small ribosomal subunit protein bS20</fullName>
    </recommendedName>
    <alternativeName>
        <fullName evidence="3">30S ribosomal protein S20</fullName>
    </alternativeName>
</protein>
<gene>
    <name evidence="1" type="primary">rpsT</name>
    <name type="ordered locus">YPDSF_3159</name>
</gene>
<evidence type="ECO:0000255" key="1">
    <source>
        <dbReference type="HAMAP-Rule" id="MF_00500"/>
    </source>
</evidence>
<evidence type="ECO:0000256" key="2">
    <source>
        <dbReference type="SAM" id="MobiDB-lite"/>
    </source>
</evidence>
<evidence type="ECO:0000305" key="3"/>
<sequence length="87" mass="9789">MANIKSAKKRAVQSEKRRKHNASRRSMVRTFIKKVYAAIAAGDKDAAQKAFNEMQPIVDRQSCKGLIHKNKAARHKSNLVAQINAMQ</sequence>
<name>RS20_YERPP</name>
<accession>A4TQF5</accession>
<feature type="chain" id="PRO_1000014676" description="Small ribosomal subunit protein bS20">
    <location>
        <begin position="1"/>
        <end position="87"/>
    </location>
</feature>
<feature type="region of interest" description="Disordered" evidence="2">
    <location>
        <begin position="1"/>
        <end position="25"/>
    </location>
</feature>
<dbReference type="EMBL" id="CP000668">
    <property type="protein sequence ID" value="ABP41517.1"/>
    <property type="molecule type" value="Genomic_DNA"/>
</dbReference>
<dbReference type="RefSeq" id="WP_002220715.1">
    <property type="nucleotide sequence ID" value="NZ_CP009715.1"/>
</dbReference>
<dbReference type="SMR" id="A4TQF5"/>
<dbReference type="GeneID" id="97457675"/>
<dbReference type="KEGG" id="ypp:YPDSF_3159"/>
<dbReference type="PATRIC" id="fig|386656.14.peg.1192"/>
<dbReference type="GO" id="GO:0005829">
    <property type="term" value="C:cytosol"/>
    <property type="evidence" value="ECO:0007669"/>
    <property type="project" value="TreeGrafter"/>
</dbReference>
<dbReference type="GO" id="GO:0015935">
    <property type="term" value="C:small ribosomal subunit"/>
    <property type="evidence" value="ECO:0007669"/>
    <property type="project" value="TreeGrafter"/>
</dbReference>
<dbReference type="GO" id="GO:0070181">
    <property type="term" value="F:small ribosomal subunit rRNA binding"/>
    <property type="evidence" value="ECO:0007669"/>
    <property type="project" value="TreeGrafter"/>
</dbReference>
<dbReference type="GO" id="GO:0003735">
    <property type="term" value="F:structural constituent of ribosome"/>
    <property type="evidence" value="ECO:0007669"/>
    <property type="project" value="InterPro"/>
</dbReference>
<dbReference type="GO" id="GO:0006412">
    <property type="term" value="P:translation"/>
    <property type="evidence" value="ECO:0007669"/>
    <property type="project" value="UniProtKB-UniRule"/>
</dbReference>
<dbReference type="FunFam" id="1.20.58.110:FF:000001">
    <property type="entry name" value="30S ribosomal protein S20"/>
    <property type="match status" value="1"/>
</dbReference>
<dbReference type="Gene3D" id="1.20.58.110">
    <property type="entry name" value="Ribosomal protein S20"/>
    <property type="match status" value="1"/>
</dbReference>
<dbReference type="HAMAP" id="MF_00500">
    <property type="entry name" value="Ribosomal_bS20"/>
    <property type="match status" value="1"/>
</dbReference>
<dbReference type="InterPro" id="IPR002583">
    <property type="entry name" value="Ribosomal_bS20"/>
</dbReference>
<dbReference type="InterPro" id="IPR036510">
    <property type="entry name" value="Ribosomal_bS20_sf"/>
</dbReference>
<dbReference type="NCBIfam" id="TIGR00029">
    <property type="entry name" value="S20"/>
    <property type="match status" value="1"/>
</dbReference>
<dbReference type="PANTHER" id="PTHR33398">
    <property type="entry name" value="30S RIBOSOMAL PROTEIN S20"/>
    <property type="match status" value="1"/>
</dbReference>
<dbReference type="PANTHER" id="PTHR33398:SF1">
    <property type="entry name" value="SMALL RIBOSOMAL SUBUNIT PROTEIN BS20C"/>
    <property type="match status" value="1"/>
</dbReference>
<dbReference type="Pfam" id="PF01649">
    <property type="entry name" value="Ribosomal_S20p"/>
    <property type="match status" value="1"/>
</dbReference>
<dbReference type="SUPFAM" id="SSF46992">
    <property type="entry name" value="Ribosomal protein S20"/>
    <property type="match status" value="1"/>
</dbReference>
<organism>
    <name type="scientific">Yersinia pestis (strain Pestoides F)</name>
    <dbReference type="NCBI Taxonomy" id="386656"/>
    <lineage>
        <taxon>Bacteria</taxon>
        <taxon>Pseudomonadati</taxon>
        <taxon>Pseudomonadota</taxon>
        <taxon>Gammaproteobacteria</taxon>
        <taxon>Enterobacterales</taxon>
        <taxon>Yersiniaceae</taxon>
        <taxon>Yersinia</taxon>
    </lineage>
</organism>
<keyword id="KW-0687">Ribonucleoprotein</keyword>
<keyword id="KW-0689">Ribosomal protein</keyword>
<keyword id="KW-0694">RNA-binding</keyword>
<keyword id="KW-0699">rRNA-binding</keyword>
<proteinExistence type="inferred from homology"/>